<comment type="function">
    <text evidence="2 3">Transcription factor involved in epithelial development. Binds directly to the consensus DNA sequence 5'-AACCGGTT-3' (By similarity). Important regulator of DSG1 in the context of hair anchorage and epidermal differentiation, participates in the maintenance of the skin barrier. There is no genetic interaction with GRHL3, nor functional cooperativity due to diverse target gene selectivity during epithelia development (By similarity). May play a role in regulating glucose homeostasis and insulin signaling (By similarity).</text>
</comment>
<comment type="subunit">
    <text evidence="3">Binds DNA as homodimer. Homodimer, also forms heterodimers with GRHL2 or GRHL3.</text>
</comment>
<comment type="subcellular location">
    <subcellularLocation>
        <location evidence="3">Nucleus</location>
    </subcellularLocation>
</comment>
<comment type="PTM">
    <text evidence="3">Methylation at Arg-9 and Lys-116 may be involved in regulating transcriptional activation.</text>
</comment>
<comment type="miscellaneous">
    <text evidence="2">GRHL genes (GRHL1, GRHL2 and GRHL3) show a paradoxical lack of redundancy despite their extensive sequence identity in the DNA-binding and protein dimerization domains and the fact that the core consensus DNA binding sites are identical. They have related but remarkably different functions during embryogenesis because of their differential spatiotemporal expression patterns during development.</text>
</comment>
<comment type="similarity">
    <text evidence="6">Belongs to the grh/CP2 family. Grainyhead subfamily.</text>
</comment>
<organism>
    <name type="scientific">Pongo abelii</name>
    <name type="common">Sumatran orangutan</name>
    <name type="synonym">Pongo pygmaeus abelii</name>
    <dbReference type="NCBI Taxonomy" id="9601"/>
    <lineage>
        <taxon>Eukaryota</taxon>
        <taxon>Metazoa</taxon>
        <taxon>Chordata</taxon>
        <taxon>Craniata</taxon>
        <taxon>Vertebrata</taxon>
        <taxon>Euteleostomi</taxon>
        <taxon>Mammalia</taxon>
        <taxon>Eutheria</taxon>
        <taxon>Euarchontoglires</taxon>
        <taxon>Primates</taxon>
        <taxon>Haplorrhini</taxon>
        <taxon>Catarrhini</taxon>
        <taxon>Hominidae</taxon>
        <taxon>Pongo</taxon>
    </lineage>
</organism>
<name>GRHL1_PONAB</name>
<reference key="1">
    <citation type="submission" date="2004-11" db="EMBL/GenBank/DDBJ databases">
        <authorList>
            <consortium name="The German cDNA consortium"/>
        </authorList>
    </citation>
    <scope>NUCLEOTIDE SEQUENCE [LARGE SCALE MRNA]</scope>
    <source>
        <tissue>Kidney</tissue>
    </source>
</reference>
<gene>
    <name type="primary">GRHL1</name>
</gene>
<proteinExistence type="evidence at transcript level"/>
<protein>
    <recommendedName>
        <fullName>Grainyhead-like protein 1 homolog</fullName>
    </recommendedName>
    <alternativeName>
        <fullName>Transcription factor CP2-like 2</fullName>
    </alternativeName>
</protein>
<keyword id="KW-0010">Activator</keyword>
<keyword id="KW-0217">Developmental protein</keyword>
<keyword id="KW-0238">DNA-binding</keyword>
<keyword id="KW-0539">Nucleus</keyword>
<keyword id="KW-0597">Phosphoprotein</keyword>
<keyword id="KW-1185">Reference proteome</keyword>
<keyword id="KW-0804">Transcription</keyword>
<keyword id="KW-0805">Transcription regulation</keyword>
<feature type="chain" id="PRO_0000227992" description="Grainyhead-like protein 1 homolog">
    <location>
        <begin position="1"/>
        <end position="618"/>
    </location>
</feature>
<feature type="domain" description="Grh/CP2 DB" evidence="4">
    <location>
        <begin position="248"/>
        <end position="474"/>
    </location>
</feature>
<feature type="region of interest" description="Transcription activation" evidence="1">
    <location>
        <begin position="1"/>
        <end position="91"/>
    </location>
</feature>
<feature type="region of interest" description="Disordered" evidence="5">
    <location>
        <begin position="74"/>
        <end position="94"/>
    </location>
</feature>
<feature type="region of interest" description="Interaction with DNA" evidence="3">
    <location>
        <begin position="380"/>
        <end position="389"/>
    </location>
</feature>
<feature type="region of interest" description="Interaction with DNA" evidence="3">
    <location>
        <begin position="427"/>
        <end position="430"/>
    </location>
</feature>
<feature type="compositionally biased region" description="Basic and acidic residues" evidence="5">
    <location>
        <begin position="74"/>
        <end position="92"/>
    </location>
</feature>
<feature type="modified residue" description="Phosphothreonine" evidence="3">
    <location>
        <position position="208"/>
    </location>
</feature>
<sequence>MTQEYDNKRPVLVLQNEALYPQRRSYTSEDEAWKSFLENPLTAATKAMMSINGDEDSAAALGLLYDYYKVPRERRSSTAKPEVEHPEPDHSKRNSIPIVTEQPLISAGENRVQVLKNVPFNIVLPHGNQLGIDKRGHLTVPDTTVTVSIATMPTHSIKTETQPHGFTVGIPPAVYHPEPTERVVVFDRNLSTDQFSSGAQAPNAQRRTPDSTFSETFKEGVQEVFFPSDLSLRMPGMNSEDYVFDSVSGNNFEYTLEASKSLRQKPGDSTMTYLNKGQFYPITLKEVSSNEGIHHPISKVRSVTMVVFAEDKSREDQLRHWKYWHSRQHTAKQRCIDIADYKESFNTISNIEEIAYNAISFTWDINDEAKVFISVNCLSTDFSSQKGVKGLPLNIQIDTYSYNNRSNKPVHRAYCQIKVFCDKGAERKIRDEERKQSKRKVSDVKVPLLPSHKRMDITVFKPFIDLDTQPVLFIPDVHFASLQRGTHVLPIASEELEGEGSVLKRGPYSTEDDFAVPPSAKLARIEEPKRVLLYVRKESEEVFDALMLKTPSLKGLMEAISDKYDVPHDKIGKIFKKCKKGILVNMDDNIVKHYSNEDTFQLQIEEAGGSYKLTLIEI</sequence>
<dbReference type="EMBL" id="CR858944">
    <property type="protein sequence ID" value="CAH91142.1"/>
    <property type="molecule type" value="mRNA"/>
</dbReference>
<dbReference type="RefSeq" id="NP_001125668.1">
    <property type="nucleotide sequence ID" value="NM_001132196.2"/>
</dbReference>
<dbReference type="SMR" id="Q5RAR8"/>
<dbReference type="FunCoup" id="Q5RAR8">
    <property type="interactions" value="2100"/>
</dbReference>
<dbReference type="STRING" id="9601.ENSPPYP00000014134"/>
<dbReference type="GeneID" id="100172588"/>
<dbReference type="KEGG" id="pon:100172588"/>
<dbReference type="CTD" id="29841"/>
<dbReference type="eggNOG" id="KOG4091">
    <property type="taxonomic scope" value="Eukaryota"/>
</dbReference>
<dbReference type="InParanoid" id="Q5RAR8"/>
<dbReference type="OrthoDB" id="7680836at2759"/>
<dbReference type="Proteomes" id="UP000001595">
    <property type="component" value="Unplaced"/>
</dbReference>
<dbReference type="GO" id="GO:0005634">
    <property type="term" value="C:nucleus"/>
    <property type="evidence" value="ECO:0000250"/>
    <property type="project" value="UniProtKB"/>
</dbReference>
<dbReference type="GO" id="GO:0031490">
    <property type="term" value="F:chromatin DNA binding"/>
    <property type="evidence" value="ECO:0000250"/>
    <property type="project" value="UniProtKB"/>
</dbReference>
<dbReference type="GO" id="GO:0001228">
    <property type="term" value="F:DNA-binding transcription activator activity, RNA polymerase II-specific"/>
    <property type="evidence" value="ECO:0000250"/>
    <property type="project" value="UniProtKB"/>
</dbReference>
<dbReference type="GO" id="GO:0000978">
    <property type="term" value="F:RNA polymerase II cis-regulatory region sequence-specific DNA binding"/>
    <property type="evidence" value="ECO:0007669"/>
    <property type="project" value="TreeGrafter"/>
</dbReference>
<dbReference type="GO" id="GO:0043565">
    <property type="term" value="F:sequence-specific DNA binding"/>
    <property type="evidence" value="ECO:0000250"/>
    <property type="project" value="UniProtKB"/>
</dbReference>
<dbReference type="GO" id="GO:0000976">
    <property type="term" value="F:transcription cis-regulatory region binding"/>
    <property type="evidence" value="ECO:0000250"/>
    <property type="project" value="UniProtKB"/>
</dbReference>
<dbReference type="GO" id="GO:0008544">
    <property type="term" value="P:epidermis development"/>
    <property type="evidence" value="ECO:0000250"/>
    <property type="project" value="UniProtKB"/>
</dbReference>
<dbReference type="GO" id="GO:0045944">
    <property type="term" value="P:positive regulation of transcription by RNA polymerase II"/>
    <property type="evidence" value="ECO:0000250"/>
    <property type="project" value="UniProtKB"/>
</dbReference>
<dbReference type="InterPro" id="IPR007604">
    <property type="entry name" value="CP2"/>
</dbReference>
<dbReference type="InterPro" id="IPR040167">
    <property type="entry name" value="TF_CP2-like"/>
</dbReference>
<dbReference type="PANTHER" id="PTHR11037:SF16">
    <property type="entry name" value="GRAINYHEAD-LIKE PROTEIN 1 HOMOLOG"/>
    <property type="match status" value="1"/>
</dbReference>
<dbReference type="PANTHER" id="PTHR11037">
    <property type="entry name" value="TRANSCRIPTION FACTOR CP2"/>
    <property type="match status" value="1"/>
</dbReference>
<dbReference type="Pfam" id="PF04516">
    <property type="entry name" value="CP2"/>
    <property type="match status" value="1"/>
</dbReference>
<dbReference type="Pfam" id="PF25416">
    <property type="entry name" value="GRHL1_C"/>
    <property type="match status" value="1"/>
</dbReference>
<dbReference type="PROSITE" id="PS51968">
    <property type="entry name" value="GRH_CP2_DB"/>
    <property type="match status" value="1"/>
</dbReference>
<accession>Q5RAR8</accession>
<evidence type="ECO:0000250" key="1">
    <source>
        <dbReference type="UniProtKB" id="Q8K5C0"/>
    </source>
</evidence>
<evidence type="ECO:0000250" key="2">
    <source>
        <dbReference type="UniProtKB" id="Q921D9"/>
    </source>
</evidence>
<evidence type="ECO:0000250" key="3">
    <source>
        <dbReference type="UniProtKB" id="Q9NZI5"/>
    </source>
</evidence>
<evidence type="ECO:0000255" key="4">
    <source>
        <dbReference type="PROSITE-ProRule" id="PRU01313"/>
    </source>
</evidence>
<evidence type="ECO:0000256" key="5">
    <source>
        <dbReference type="SAM" id="MobiDB-lite"/>
    </source>
</evidence>
<evidence type="ECO:0000305" key="6"/>